<sequence>MAESESPAIVIDNGSGMCKAGIAGDDAPRAAFPSIVGRPKMPGIMVGMDQKECYVGEEAQAKRGVLNLKYPIEHGIVTDYDDMEKIWHHCFYNELRVTPEEHPCLLTEAPQNPKLNREKMTKTMFETFNVPSFYVAIQAVLSLYASGRTTGIVVDSGDGVTHTVPIYEGYALPHAILRIDLAGRELTEYCMKLLYEIGLNFSSTAEREIIRDIKEKLCYVAIDYEAELKAYKESSQNDKSYELPDGNTITVQDQRFRCPELLFKPAFIGKEFPGIHELTFNSIMKCDVDVRKDPYNNIVLSGGTTMFPGIAERLSKEVSALAPSSMKIKVVAPPERRYSVWIGGSILSSLSTFQTMWITKAEYDESGPSIVHRKCF</sequence>
<comment type="function">
    <text>Actins are highly conserved proteins that are involved in various types of cell motility and are ubiquitously expressed in all eukaryotic cells.</text>
</comment>
<comment type="catalytic activity">
    <reaction evidence="1">
        <text>ATP + H2O = ADP + phosphate + H(+)</text>
        <dbReference type="Rhea" id="RHEA:13065"/>
        <dbReference type="ChEBI" id="CHEBI:15377"/>
        <dbReference type="ChEBI" id="CHEBI:15378"/>
        <dbReference type="ChEBI" id="CHEBI:30616"/>
        <dbReference type="ChEBI" id="CHEBI:43474"/>
        <dbReference type="ChEBI" id="CHEBI:456216"/>
    </reaction>
</comment>
<comment type="subcellular location">
    <subcellularLocation>
        <location>Cytoplasm</location>
        <location>Cytoskeleton</location>
    </subcellularLocation>
</comment>
<comment type="similarity">
    <text evidence="2">Belongs to the actin family.</text>
</comment>
<protein>
    <recommendedName>
        <fullName>Actin, macronuclear</fullName>
        <ecNumber evidence="1">3.6.4.-</ecNumber>
    </recommendedName>
</protein>
<evidence type="ECO:0000250" key="1">
    <source>
        <dbReference type="UniProtKB" id="P68137"/>
    </source>
</evidence>
<evidence type="ECO:0000305" key="2"/>
<keyword id="KW-0002">3D-structure</keyword>
<keyword id="KW-0067">ATP-binding</keyword>
<keyword id="KW-0963">Cytoplasm</keyword>
<keyword id="KW-0206">Cytoskeleton</keyword>
<keyword id="KW-0378">Hydrolase</keyword>
<keyword id="KW-0547">Nucleotide-binding</keyword>
<dbReference type="EC" id="3.6.4.-" evidence="1"/>
<dbReference type="EMBL" id="M13939">
    <property type="protein sequence ID" value="AAA30109.1"/>
    <property type="molecule type" value="Genomic_DNA"/>
</dbReference>
<dbReference type="PIR" id="A29407">
    <property type="entry name" value="A29407"/>
</dbReference>
<dbReference type="PDB" id="1DEJ">
    <property type="method" value="X-ray"/>
    <property type="resolution" value="2.40 A"/>
    <property type="chains" value="A=-"/>
</dbReference>
<dbReference type="PDBsum" id="1DEJ"/>
<dbReference type="SMR" id="P10992"/>
<dbReference type="GO" id="GO:0005737">
    <property type="term" value="C:cytoplasm"/>
    <property type="evidence" value="ECO:0007669"/>
    <property type="project" value="UniProtKB-KW"/>
</dbReference>
<dbReference type="GO" id="GO:0005856">
    <property type="term" value="C:cytoskeleton"/>
    <property type="evidence" value="ECO:0007669"/>
    <property type="project" value="UniProtKB-SubCell"/>
</dbReference>
<dbReference type="GO" id="GO:0005524">
    <property type="term" value="F:ATP binding"/>
    <property type="evidence" value="ECO:0007669"/>
    <property type="project" value="UniProtKB-KW"/>
</dbReference>
<dbReference type="GO" id="GO:0016787">
    <property type="term" value="F:hydrolase activity"/>
    <property type="evidence" value="ECO:0007669"/>
    <property type="project" value="UniProtKB-KW"/>
</dbReference>
<dbReference type="CDD" id="cd10224">
    <property type="entry name" value="ASKHA_NBD_actin"/>
    <property type="match status" value="1"/>
</dbReference>
<dbReference type="FunFam" id="3.30.420.40:FF:000291">
    <property type="entry name" value="Actin, alpha skeletal muscle"/>
    <property type="match status" value="1"/>
</dbReference>
<dbReference type="FunFam" id="3.90.640.10:FF:000047">
    <property type="entry name" value="Actin, alpha skeletal muscle"/>
    <property type="match status" value="1"/>
</dbReference>
<dbReference type="FunFam" id="3.30.420.40:FF:000404">
    <property type="entry name" value="Major actin"/>
    <property type="match status" value="1"/>
</dbReference>
<dbReference type="FunFam" id="3.30.420.40:FF:000058">
    <property type="entry name" value="Putative actin-related protein 5"/>
    <property type="match status" value="1"/>
</dbReference>
<dbReference type="Gene3D" id="3.30.420.40">
    <property type="match status" value="2"/>
</dbReference>
<dbReference type="Gene3D" id="3.90.640.10">
    <property type="entry name" value="Actin, Chain A, domain 4"/>
    <property type="match status" value="1"/>
</dbReference>
<dbReference type="InterPro" id="IPR004000">
    <property type="entry name" value="Actin"/>
</dbReference>
<dbReference type="InterPro" id="IPR020902">
    <property type="entry name" value="Actin/actin-like_CS"/>
</dbReference>
<dbReference type="InterPro" id="IPR004001">
    <property type="entry name" value="Actin_CS"/>
</dbReference>
<dbReference type="InterPro" id="IPR043129">
    <property type="entry name" value="ATPase_NBD"/>
</dbReference>
<dbReference type="PANTHER" id="PTHR11937">
    <property type="entry name" value="ACTIN"/>
    <property type="match status" value="1"/>
</dbReference>
<dbReference type="Pfam" id="PF00022">
    <property type="entry name" value="Actin"/>
    <property type="match status" value="1"/>
</dbReference>
<dbReference type="PRINTS" id="PR00190">
    <property type="entry name" value="ACTIN"/>
</dbReference>
<dbReference type="SMART" id="SM00268">
    <property type="entry name" value="ACTIN"/>
    <property type="match status" value="1"/>
</dbReference>
<dbReference type="SUPFAM" id="SSF53067">
    <property type="entry name" value="Actin-like ATPase domain"/>
    <property type="match status" value="2"/>
</dbReference>
<dbReference type="PROSITE" id="PS00406">
    <property type="entry name" value="ACTINS_1"/>
    <property type="match status" value="1"/>
</dbReference>
<dbReference type="PROSITE" id="PS00432">
    <property type="entry name" value="ACTINS_2"/>
    <property type="match status" value="1"/>
</dbReference>
<dbReference type="PROSITE" id="PS01132">
    <property type="entry name" value="ACTINS_ACT_LIKE"/>
    <property type="match status" value="1"/>
</dbReference>
<feature type="initiator methionine" description="Removed">
    <location>
        <position position="1"/>
    </location>
</feature>
<feature type="chain" id="PRO_0000089035" description="Actin, macronuclear">
    <location>
        <begin position="2"/>
        <end position="376"/>
    </location>
</feature>
<accession>P10992</accession>
<proteinExistence type="evidence at protein level"/>
<name>ACT1_TETTH</name>
<organism>
    <name type="scientific">Tetrahymena thermophila</name>
    <dbReference type="NCBI Taxonomy" id="5911"/>
    <lineage>
        <taxon>Eukaryota</taxon>
        <taxon>Sar</taxon>
        <taxon>Alveolata</taxon>
        <taxon>Ciliophora</taxon>
        <taxon>Intramacronucleata</taxon>
        <taxon>Oligohymenophorea</taxon>
        <taxon>Hymenostomatida</taxon>
        <taxon>Tetrahymenina</taxon>
        <taxon>Tetrahymenidae</taxon>
        <taxon>Tetrahymena</taxon>
    </lineage>
</organism>
<reference key="1">
    <citation type="journal article" date="1986" name="Proc. Natl. Acad. Sci. U.S.A.">
        <title>Isolation and characterization of the actin gene from Tetrahymena thermophila.</title>
        <authorList>
            <person name="Cupples C.G."/>
            <person name="Pearlman R.E."/>
        </authorList>
    </citation>
    <scope>NUCLEOTIDE SEQUENCE [GENOMIC DNA]</scope>
</reference>